<protein>
    <recommendedName>
        <fullName evidence="1">ATP synthase subunit beta</fullName>
        <ecNumber evidence="1">7.1.2.2</ecNumber>
    </recommendedName>
    <alternativeName>
        <fullName evidence="1">ATP synthase F1 sector subunit beta</fullName>
    </alternativeName>
    <alternativeName>
        <fullName evidence="1">F-ATPase subunit beta</fullName>
    </alternativeName>
</protein>
<sequence>MSSLTGKVKGRARKIKGDADIRINESTENVGLVIRVMTAVVDIKFPSGKVPKILNALESKEIYNGKKLVLEVSQHISDSIVRCIALDSTDGLSRNDEFIDTGAPISVPVGRATLGRVFDVLGNPIDNCGPLTKSDYSIKPIYSEVPKLTDQKVTTEILVTGIKVIDLLAPYLKGGKVGLFGGAGVGKTVLIMELIHNIAKAHKGVSVFAGVGERTREGNDLYHEMIESGVINLEEKDKSQAVLVYGQMNEPPGARLRVALSALTMAEYFRDVENQDVLFFVDNIFRFTQSGSEISALLGRIPSAVGYQPTLAAEMGAMQERITSTNRGSITSVQAIYVPADDLTDPAPATSFAHLDSTTVLSRQIAELGIYPAVDPLDSASQALSIDIVGEKHYEVSKEVQRILQTYKSLQDIIAILGMEELSEEDKLIVARARKIQRFLSQPFHVAEVFTGTPGVFVSLEDTVSSFKDIVEGKYDHLPEAAFYMVSNINEAVKKAELLQKEGK</sequence>
<feature type="chain" id="PRO_0000254258" description="ATP synthase subunit beta">
    <location>
        <begin position="1"/>
        <end position="504"/>
    </location>
</feature>
<feature type="binding site" evidence="1">
    <location>
        <begin position="181"/>
        <end position="188"/>
    </location>
    <ligand>
        <name>ATP</name>
        <dbReference type="ChEBI" id="CHEBI:30616"/>
    </ligand>
</feature>
<name>ATPB_EHRRW</name>
<organism>
    <name type="scientific">Ehrlichia ruminantium (strain Welgevonden)</name>
    <dbReference type="NCBI Taxonomy" id="254945"/>
    <lineage>
        <taxon>Bacteria</taxon>
        <taxon>Pseudomonadati</taxon>
        <taxon>Pseudomonadota</taxon>
        <taxon>Alphaproteobacteria</taxon>
        <taxon>Rickettsiales</taxon>
        <taxon>Anaplasmataceae</taxon>
        <taxon>Ehrlichia</taxon>
    </lineage>
</organism>
<keyword id="KW-0066">ATP synthesis</keyword>
<keyword id="KW-0067">ATP-binding</keyword>
<keyword id="KW-0997">Cell inner membrane</keyword>
<keyword id="KW-1003">Cell membrane</keyword>
<keyword id="KW-0139">CF(1)</keyword>
<keyword id="KW-0375">Hydrogen ion transport</keyword>
<keyword id="KW-0406">Ion transport</keyword>
<keyword id="KW-0472">Membrane</keyword>
<keyword id="KW-0547">Nucleotide-binding</keyword>
<keyword id="KW-1278">Translocase</keyword>
<keyword id="KW-0813">Transport</keyword>
<accession>Q5HB71</accession>
<accession>Q5FEJ1</accession>
<reference key="1">
    <citation type="journal article" date="2005" name="Proc. Natl. Acad. Sci. U.S.A.">
        <title>The genome of the heartwater agent Ehrlichia ruminantium contains multiple tandem repeats of actively variable copy number.</title>
        <authorList>
            <person name="Collins N.E."/>
            <person name="Liebenberg J."/>
            <person name="de Villiers E.P."/>
            <person name="Brayton K.A."/>
            <person name="Louw E."/>
            <person name="Pretorius A."/>
            <person name="Faber F.E."/>
            <person name="van Heerden H."/>
            <person name="Josemans A."/>
            <person name="van Kleef M."/>
            <person name="Steyn H.C."/>
            <person name="van Strijp M.F."/>
            <person name="Zweygarth E."/>
            <person name="Jongejan F."/>
            <person name="Maillard J.C."/>
            <person name="Berthier D."/>
            <person name="Botha M."/>
            <person name="Joubert F."/>
            <person name="Corton C.H."/>
            <person name="Thomson N.R."/>
            <person name="Allsopp M.T."/>
            <person name="Allsopp B.A."/>
        </authorList>
    </citation>
    <scope>NUCLEOTIDE SEQUENCE [LARGE SCALE GENOMIC DNA]</scope>
    <source>
        <strain>Welgevonden</strain>
    </source>
</reference>
<reference key="2">
    <citation type="journal article" date="2006" name="J. Bacteriol.">
        <title>Comparative genomic analysis of three strains of Ehrlichia ruminantium reveals an active process of genome size plasticity.</title>
        <authorList>
            <person name="Frutos R."/>
            <person name="Viari A."/>
            <person name="Ferraz C."/>
            <person name="Morgat A."/>
            <person name="Eychenie S."/>
            <person name="Kandassamy Y."/>
            <person name="Chantal I."/>
            <person name="Bensaid A."/>
            <person name="Coissac E."/>
            <person name="Vachiery N."/>
            <person name="Demaille J."/>
            <person name="Martinez D."/>
        </authorList>
    </citation>
    <scope>NUCLEOTIDE SEQUENCE [LARGE SCALE GENOMIC DNA]</scope>
    <source>
        <strain>Welgevonden</strain>
    </source>
</reference>
<proteinExistence type="inferred from homology"/>
<evidence type="ECO:0000255" key="1">
    <source>
        <dbReference type="HAMAP-Rule" id="MF_01347"/>
    </source>
</evidence>
<evidence type="ECO:0000305" key="2"/>
<comment type="function">
    <text evidence="1">Produces ATP from ADP in the presence of a proton gradient across the membrane. The catalytic sites are hosted primarily by the beta subunits.</text>
</comment>
<comment type="catalytic activity">
    <reaction evidence="1">
        <text>ATP + H2O + 4 H(+)(in) = ADP + phosphate + 5 H(+)(out)</text>
        <dbReference type="Rhea" id="RHEA:57720"/>
        <dbReference type="ChEBI" id="CHEBI:15377"/>
        <dbReference type="ChEBI" id="CHEBI:15378"/>
        <dbReference type="ChEBI" id="CHEBI:30616"/>
        <dbReference type="ChEBI" id="CHEBI:43474"/>
        <dbReference type="ChEBI" id="CHEBI:456216"/>
        <dbReference type="EC" id="7.1.2.2"/>
    </reaction>
</comment>
<comment type="subunit">
    <text evidence="1">F-type ATPases have 2 components, CF(1) - the catalytic core - and CF(0) - the membrane proton channel. CF(1) has five subunits: alpha(3), beta(3), gamma(1), delta(1), epsilon(1). CF(0) has three main subunits: a(1), b(2) and c(9-12). The alpha and beta chains form an alternating ring which encloses part of the gamma chain. CF(1) is attached to CF(0) by a central stalk formed by the gamma and epsilon chains, while a peripheral stalk is formed by the delta and b chains.</text>
</comment>
<comment type="subcellular location">
    <subcellularLocation>
        <location evidence="1">Cell inner membrane</location>
        <topology evidence="1">Peripheral membrane protein</topology>
    </subcellularLocation>
</comment>
<comment type="similarity">
    <text evidence="1">Belongs to the ATPase alpha/beta chains family.</text>
</comment>
<comment type="sequence caution" evidence="2">
    <conflict type="erroneous initiation">
        <sequence resource="EMBL-CDS" id="CAI26975"/>
    </conflict>
</comment>
<gene>
    <name evidence="1" type="primary">atpD</name>
    <name type="ordered locus">Erum4590</name>
    <name type="ordered locus">ERWE_CDS_04810</name>
</gene>
<dbReference type="EC" id="7.1.2.2" evidence="1"/>
<dbReference type="EMBL" id="CR767821">
    <property type="protein sequence ID" value="CAH58187.1"/>
    <property type="molecule type" value="Genomic_DNA"/>
</dbReference>
<dbReference type="EMBL" id="CR925678">
    <property type="protein sequence ID" value="CAI26975.1"/>
    <property type="status" value="ALT_INIT"/>
    <property type="molecule type" value="Genomic_DNA"/>
</dbReference>
<dbReference type="RefSeq" id="WP_011155140.1">
    <property type="nucleotide sequence ID" value="NC_005295.2"/>
</dbReference>
<dbReference type="SMR" id="Q5HB71"/>
<dbReference type="GeneID" id="33057633"/>
<dbReference type="KEGG" id="eru:Erum4590"/>
<dbReference type="KEGG" id="erw:ERWE_CDS_04810"/>
<dbReference type="eggNOG" id="COG0055">
    <property type="taxonomic scope" value="Bacteria"/>
</dbReference>
<dbReference type="HOGENOM" id="CLU_022398_0_2_5"/>
<dbReference type="Proteomes" id="UP000001021">
    <property type="component" value="Chromosome"/>
</dbReference>
<dbReference type="GO" id="GO:0005886">
    <property type="term" value="C:plasma membrane"/>
    <property type="evidence" value="ECO:0007669"/>
    <property type="project" value="UniProtKB-SubCell"/>
</dbReference>
<dbReference type="GO" id="GO:0045259">
    <property type="term" value="C:proton-transporting ATP synthase complex"/>
    <property type="evidence" value="ECO:0007669"/>
    <property type="project" value="UniProtKB-KW"/>
</dbReference>
<dbReference type="GO" id="GO:0005524">
    <property type="term" value="F:ATP binding"/>
    <property type="evidence" value="ECO:0007669"/>
    <property type="project" value="UniProtKB-UniRule"/>
</dbReference>
<dbReference type="GO" id="GO:0016887">
    <property type="term" value="F:ATP hydrolysis activity"/>
    <property type="evidence" value="ECO:0007669"/>
    <property type="project" value="InterPro"/>
</dbReference>
<dbReference type="GO" id="GO:0046933">
    <property type="term" value="F:proton-transporting ATP synthase activity, rotational mechanism"/>
    <property type="evidence" value="ECO:0007669"/>
    <property type="project" value="UniProtKB-UniRule"/>
</dbReference>
<dbReference type="CDD" id="cd18110">
    <property type="entry name" value="ATP-synt_F1_beta_C"/>
    <property type="match status" value="1"/>
</dbReference>
<dbReference type="CDD" id="cd18115">
    <property type="entry name" value="ATP-synt_F1_beta_N"/>
    <property type="match status" value="1"/>
</dbReference>
<dbReference type="CDD" id="cd01133">
    <property type="entry name" value="F1-ATPase_beta_CD"/>
    <property type="match status" value="1"/>
</dbReference>
<dbReference type="FunFam" id="1.10.1140.10:FF:000001">
    <property type="entry name" value="ATP synthase subunit beta"/>
    <property type="match status" value="1"/>
</dbReference>
<dbReference type="FunFam" id="3.40.50.300:FF:000026">
    <property type="entry name" value="ATP synthase subunit beta"/>
    <property type="match status" value="1"/>
</dbReference>
<dbReference type="Gene3D" id="2.40.10.170">
    <property type="match status" value="1"/>
</dbReference>
<dbReference type="Gene3D" id="1.10.1140.10">
    <property type="entry name" value="Bovine Mitochondrial F1-atpase, Atp Synthase Beta Chain, Chain D, domain 3"/>
    <property type="match status" value="1"/>
</dbReference>
<dbReference type="Gene3D" id="3.40.50.300">
    <property type="entry name" value="P-loop containing nucleotide triphosphate hydrolases"/>
    <property type="match status" value="1"/>
</dbReference>
<dbReference type="HAMAP" id="MF_01347">
    <property type="entry name" value="ATP_synth_beta_bact"/>
    <property type="match status" value="1"/>
</dbReference>
<dbReference type="InterPro" id="IPR003593">
    <property type="entry name" value="AAA+_ATPase"/>
</dbReference>
<dbReference type="InterPro" id="IPR055190">
    <property type="entry name" value="ATP-synt_VA_C"/>
</dbReference>
<dbReference type="InterPro" id="IPR005722">
    <property type="entry name" value="ATP_synth_F1_bsu"/>
</dbReference>
<dbReference type="InterPro" id="IPR020003">
    <property type="entry name" value="ATPase_a/bsu_AS"/>
</dbReference>
<dbReference type="InterPro" id="IPR050053">
    <property type="entry name" value="ATPase_alpha/beta_chains"/>
</dbReference>
<dbReference type="InterPro" id="IPR004100">
    <property type="entry name" value="ATPase_F1/V1/A1_a/bsu_N"/>
</dbReference>
<dbReference type="InterPro" id="IPR036121">
    <property type="entry name" value="ATPase_F1/V1/A1_a/bsu_N_sf"/>
</dbReference>
<dbReference type="InterPro" id="IPR000194">
    <property type="entry name" value="ATPase_F1/V1/A1_a/bsu_nucl-bd"/>
</dbReference>
<dbReference type="InterPro" id="IPR024034">
    <property type="entry name" value="ATPase_F1/V1_b/a_C"/>
</dbReference>
<dbReference type="InterPro" id="IPR027417">
    <property type="entry name" value="P-loop_NTPase"/>
</dbReference>
<dbReference type="NCBIfam" id="TIGR01039">
    <property type="entry name" value="atpD"/>
    <property type="match status" value="1"/>
</dbReference>
<dbReference type="PANTHER" id="PTHR15184">
    <property type="entry name" value="ATP SYNTHASE"/>
    <property type="match status" value="1"/>
</dbReference>
<dbReference type="PANTHER" id="PTHR15184:SF71">
    <property type="entry name" value="ATP SYNTHASE SUBUNIT BETA, MITOCHONDRIAL"/>
    <property type="match status" value="1"/>
</dbReference>
<dbReference type="Pfam" id="PF00006">
    <property type="entry name" value="ATP-synt_ab"/>
    <property type="match status" value="1"/>
</dbReference>
<dbReference type="Pfam" id="PF02874">
    <property type="entry name" value="ATP-synt_ab_N"/>
    <property type="match status" value="1"/>
</dbReference>
<dbReference type="Pfam" id="PF22919">
    <property type="entry name" value="ATP-synt_VA_C"/>
    <property type="match status" value="1"/>
</dbReference>
<dbReference type="SMART" id="SM00382">
    <property type="entry name" value="AAA"/>
    <property type="match status" value="1"/>
</dbReference>
<dbReference type="SUPFAM" id="SSF47917">
    <property type="entry name" value="C-terminal domain of alpha and beta subunits of F1 ATP synthase"/>
    <property type="match status" value="1"/>
</dbReference>
<dbReference type="SUPFAM" id="SSF50615">
    <property type="entry name" value="N-terminal domain of alpha and beta subunits of F1 ATP synthase"/>
    <property type="match status" value="1"/>
</dbReference>
<dbReference type="SUPFAM" id="SSF52540">
    <property type="entry name" value="P-loop containing nucleoside triphosphate hydrolases"/>
    <property type="match status" value="1"/>
</dbReference>
<dbReference type="PROSITE" id="PS00152">
    <property type="entry name" value="ATPASE_ALPHA_BETA"/>
    <property type="match status" value="1"/>
</dbReference>